<proteinExistence type="inferred from homology"/>
<protein>
    <recommendedName>
        <fullName evidence="1">SsrA-binding protein</fullName>
    </recommendedName>
    <alternativeName>
        <fullName evidence="1">Small protein B</fullName>
    </alternativeName>
</protein>
<reference key="1">
    <citation type="journal article" date="2001" name="Proc. Natl. Acad. Sci. U.S.A.">
        <title>Genome sequence of an industrial microorganism Streptomyces avermitilis: deducing the ability of producing secondary metabolites.</title>
        <authorList>
            <person name="Omura S."/>
            <person name="Ikeda H."/>
            <person name="Ishikawa J."/>
            <person name="Hanamoto A."/>
            <person name="Takahashi C."/>
            <person name="Shinose M."/>
            <person name="Takahashi Y."/>
            <person name="Horikawa H."/>
            <person name="Nakazawa H."/>
            <person name="Osonoe T."/>
            <person name="Kikuchi H."/>
            <person name="Shiba T."/>
            <person name="Sakaki Y."/>
            <person name="Hattori M."/>
        </authorList>
    </citation>
    <scope>NUCLEOTIDE SEQUENCE [LARGE SCALE GENOMIC DNA]</scope>
    <source>
        <strain>ATCC 31267 / DSM 46492 / JCM 5070 / NBRC 14893 / NCIMB 12804 / NRRL 8165 / MA-4680</strain>
    </source>
</reference>
<reference key="2">
    <citation type="journal article" date="2003" name="Nat. Biotechnol.">
        <title>Complete genome sequence and comparative analysis of the industrial microorganism Streptomyces avermitilis.</title>
        <authorList>
            <person name="Ikeda H."/>
            <person name="Ishikawa J."/>
            <person name="Hanamoto A."/>
            <person name="Shinose M."/>
            <person name="Kikuchi H."/>
            <person name="Shiba T."/>
            <person name="Sakaki Y."/>
            <person name="Hattori M."/>
            <person name="Omura S."/>
        </authorList>
    </citation>
    <scope>NUCLEOTIDE SEQUENCE [LARGE SCALE GENOMIC DNA]</scope>
    <source>
        <strain>ATCC 31267 / DSM 46492 / JCM 5070 / NBRC 14893 / NCIMB 12804 / NRRL 8165 / MA-4680</strain>
    </source>
</reference>
<sequence>MYVPKESQPKQGGGASGKVKDGKRKIVAQNKKARHDYAIIDTYEAGLVLTGTEVKSLRQGRASLTDGFVQIDGNEAWLHNAHIPEYSQGTWTNHTVRRKRKLLLHREEIDKLASKSEETGHTIVPLALYFKDGRAKAEIALARGKKEYDKRQTLREKQDRRESDRAIAAAKRKQRGE</sequence>
<accession>Q82D77</accession>
<comment type="function">
    <text evidence="1">Required for rescue of stalled ribosomes mediated by trans-translation. Binds to transfer-messenger RNA (tmRNA), required for stable association of tmRNA with ribosomes. tmRNA and SmpB together mimic tRNA shape, replacing the anticodon stem-loop with SmpB. tmRNA is encoded by the ssrA gene; the 2 termini fold to resemble tRNA(Ala) and it encodes a 'tag peptide', a short internal open reading frame. During trans-translation Ala-aminoacylated tmRNA acts like a tRNA, entering the A-site of stalled ribosomes, displacing the stalled mRNA. The ribosome then switches to translate the ORF on the tmRNA; the nascent peptide is terminated with the 'tag peptide' encoded by the tmRNA and targeted for degradation. The ribosome is freed to recommence translation, which seems to be the essential function of trans-translation.</text>
</comment>
<comment type="subcellular location">
    <subcellularLocation>
        <location evidence="1">Cytoplasm</location>
    </subcellularLocation>
    <text evidence="1">The tmRNA-SmpB complex associates with stalled 70S ribosomes.</text>
</comment>
<comment type="similarity">
    <text evidence="1">Belongs to the SmpB family.</text>
</comment>
<name>SSRP_STRAW</name>
<feature type="chain" id="PRO_0000103038" description="SsrA-binding protein">
    <location>
        <begin position="1"/>
        <end position="177"/>
    </location>
</feature>
<feature type="region of interest" description="Disordered" evidence="2">
    <location>
        <begin position="1"/>
        <end position="23"/>
    </location>
</feature>
<feature type="region of interest" description="Disordered" evidence="2">
    <location>
        <begin position="148"/>
        <end position="177"/>
    </location>
</feature>
<feature type="compositionally biased region" description="Basic and acidic residues" evidence="2">
    <location>
        <begin position="148"/>
        <end position="165"/>
    </location>
</feature>
<keyword id="KW-0963">Cytoplasm</keyword>
<keyword id="KW-1185">Reference proteome</keyword>
<keyword id="KW-0694">RNA-binding</keyword>
<organism>
    <name type="scientific">Streptomyces avermitilis (strain ATCC 31267 / DSM 46492 / JCM 5070 / NBRC 14893 / NCIMB 12804 / NRRL 8165 / MA-4680)</name>
    <dbReference type="NCBI Taxonomy" id="227882"/>
    <lineage>
        <taxon>Bacteria</taxon>
        <taxon>Bacillati</taxon>
        <taxon>Actinomycetota</taxon>
        <taxon>Actinomycetes</taxon>
        <taxon>Kitasatosporales</taxon>
        <taxon>Streptomycetaceae</taxon>
        <taxon>Streptomyces</taxon>
    </lineage>
</organism>
<gene>
    <name evidence="1" type="primary">smpB</name>
    <name type="ordered locus">SAV_5107</name>
</gene>
<evidence type="ECO:0000255" key="1">
    <source>
        <dbReference type="HAMAP-Rule" id="MF_00023"/>
    </source>
</evidence>
<evidence type="ECO:0000256" key="2">
    <source>
        <dbReference type="SAM" id="MobiDB-lite"/>
    </source>
</evidence>
<dbReference type="EMBL" id="BA000030">
    <property type="protein sequence ID" value="BAC72819.1"/>
    <property type="molecule type" value="Genomic_DNA"/>
</dbReference>
<dbReference type="SMR" id="Q82D77"/>
<dbReference type="KEGG" id="sma:SAVERM_5107"/>
<dbReference type="eggNOG" id="COG0691">
    <property type="taxonomic scope" value="Bacteria"/>
</dbReference>
<dbReference type="HOGENOM" id="CLU_108953_2_1_11"/>
<dbReference type="Proteomes" id="UP000000428">
    <property type="component" value="Chromosome"/>
</dbReference>
<dbReference type="GO" id="GO:0005829">
    <property type="term" value="C:cytosol"/>
    <property type="evidence" value="ECO:0007669"/>
    <property type="project" value="TreeGrafter"/>
</dbReference>
<dbReference type="GO" id="GO:0003723">
    <property type="term" value="F:RNA binding"/>
    <property type="evidence" value="ECO:0007669"/>
    <property type="project" value="UniProtKB-UniRule"/>
</dbReference>
<dbReference type="GO" id="GO:0070929">
    <property type="term" value="P:trans-translation"/>
    <property type="evidence" value="ECO:0007669"/>
    <property type="project" value="UniProtKB-UniRule"/>
</dbReference>
<dbReference type="CDD" id="cd09294">
    <property type="entry name" value="SmpB"/>
    <property type="match status" value="1"/>
</dbReference>
<dbReference type="Gene3D" id="2.40.280.10">
    <property type="match status" value="1"/>
</dbReference>
<dbReference type="HAMAP" id="MF_00023">
    <property type="entry name" value="SmpB"/>
    <property type="match status" value="1"/>
</dbReference>
<dbReference type="InterPro" id="IPR023620">
    <property type="entry name" value="SmpB"/>
</dbReference>
<dbReference type="InterPro" id="IPR000037">
    <property type="entry name" value="SsrA-bd_prot"/>
</dbReference>
<dbReference type="InterPro" id="IPR020081">
    <property type="entry name" value="SsrA-bd_prot_CS"/>
</dbReference>
<dbReference type="NCBIfam" id="NF003843">
    <property type="entry name" value="PRK05422.1"/>
    <property type="match status" value="1"/>
</dbReference>
<dbReference type="NCBIfam" id="TIGR00086">
    <property type="entry name" value="smpB"/>
    <property type="match status" value="1"/>
</dbReference>
<dbReference type="PANTHER" id="PTHR30308:SF2">
    <property type="entry name" value="SSRA-BINDING PROTEIN"/>
    <property type="match status" value="1"/>
</dbReference>
<dbReference type="PANTHER" id="PTHR30308">
    <property type="entry name" value="TMRNA-BINDING COMPONENT OF TRANS-TRANSLATION TAGGING COMPLEX"/>
    <property type="match status" value="1"/>
</dbReference>
<dbReference type="Pfam" id="PF01668">
    <property type="entry name" value="SmpB"/>
    <property type="match status" value="1"/>
</dbReference>
<dbReference type="SUPFAM" id="SSF74982">
    <property type="entry name" value="Small protein B (SmpB)"/>
    <property type="match status" value="1"/>
</dbReference>
<dbReference type="PROSITE" id="PS01317">
    <property type="entry name" value="SSRP"/>
    <property type="match status" value="1"/>
</dbReference>